<comment type="function">
    <text evidence="1">Component of the proteasome core, a large protease complex with broad specificity involved in protein degradation.</text>
</comment>
<comment type="catalytic activity">
    <reaction evidence="1">
        <text>Cleavage of peptide bonds with very broad specificity.</text>
        <dbReference type="EC" id="3.4.25.1"/>
    </reaction>
</comment>
<comment type="activity regulation">
    <text evidence="1">The formation of the proteasomal ATPase PAN-20S proteasome complex, via the docking of the C-termini of PAN into the intersubunit pockets in the alpha-rings, triggers opening of the gate for substrate entry. Interconversion between the open-gate and close-gate conformations leads to a dynamic regulation of the 20S proteasome proteolysis activity.</text>
</comment>
<comment type="subunit">
    <text evidence="1">The 20S proteasome core is composed of 14 alpha and 14 beta subunits that assemble into four stacked heptameric rings, resulting in a barrel-shaped structure. The two inner rings, each composed of seven catalytic beta subunits, are sandwiched by two outer rings, each composed of seven alpha subunits. The catalytic chamber with the active sites is on the inside of the barrel. Has a gated structure, the ends of the cylinder being occluded by the N-termini of the alpha-subunits. Is capped at one or both ends by the proteasome regulatory ATPase, PAN.</text>
</comment>
<comment type="subcellular location">
    <subcellularLocation>
        <location evidence="1">Cytoplasm</location>
    </subcellularLocation>
</comment>
<comment type="similarity">
    <text evidence="1">Belongs to the peptidase T1B family.</text>
</comment>
<accession>A2BN24</accession>
<proteinExistence type="inferred from homology"/>
<gene>
    <name evidence="1" type="primary">psmB1</name>
    <name type="ordered locus">Hbut_1564</name>
</gene>
<reference key="1">
    <citation type="journal article" date="2007" name="Archaea">
        <title>The genome of Hyperthermus butylicus: a sulfur-reducing, peptide fermenting, neutrophilic Crenarchaeote growing up to 108 degrees C.</title>
        <authorList>
            <person name="Bruegger K."/>
            <person name="Chen L."/>
            <person name="Stark M."/>
            <person name="Zibat A."/>
            <person name="Redder P."/>
            <person name="Ruepp A."/>
            <person name="Awayez M."/>
            <person name="She Q."/>
            <person name="Garrett R.A."/>
            <person name="Klenk H.-P."/>
        </authorList>
    </citation>
    <scope>NUCLEOTIDE SEQUENCE [LARGE SCALE GENOMIC DNA]</scope>
    <source>
        <strain>DSM 5456 / JCM 9403 / PLM1-5</strain>
    </source>
</reference>
<protein>
    <recommendedName>
        <fullName evidence="1">Proteasome subunit beta 1</fullName>
        <ecNumber evidence="1">3.4.25.1</ecNumber>
    </recommendedName>
    <alternativeName>
        <fullName evidence="1">20S proteasome beta subunit 1</fullName>
    </alternativeName>
    <alternativeName>
        <fullName evidence="1">Proteasome core protein PsmB 1</fullName>
    </alternativeName>
</protein>
<feature type="propeptide" id="PRO_0000397314" description="Removed in mature form; by autocatalysis" evidence="1">
    <location>
        <begin position="1"/>
        <end position="9"/>
    </location>
</feature>
<feature type="chain" id="PRO_0000397315" description="Proteasome subunit beta 1">
    <location>
        <begin position="10"/>
        <end position="204"/>
    </location>
</feature>
<feature type="active site" description="Nucleophile" evidence="1">
    <location>
        <position position="10"/>
    </location>
</feature>
<keyword id="KW-0068">Autocatalytic cleavage</keyword>
<keyword id="KW-0963">Cytoplasm</keyword>
<keyword id="KW-0378">Hydrolase</keyword>
<keyword id="KW-0645">Protease</keyword>
<keyword id="KW-0647">Proteasome</keyword>
<keyword id="KW-1185">Reference proteome</keyword>
<keyword id="KW-0888">Threonine protease</keyword>
<keyword id="KW-0865">Zymogen</keyword>
<name>PSB1_HYPBU</name>
<dbReference type="EC" id="3.4.25.1" evidence="1"/>
<dbReference type="EMBL" id="CP000493">
    <property type="protein sequence ID" value="ABM81385.1"/>
    <property type="molecule type" value="Genomic_DNA"/>
</dbReference>
<dbReference type="RefSeq" id="WP_011822703.1">
    <property type="nucleotide sequence ID" value="NC_008818.1"/>
</dbReference>
<dbReference type="SMR" id="A2BN24"/>
<dbReference type="STRING" id="415426.Hbut_1564"/>
<dbReference type="EnsemblBacteria" id="ABM81385">
    <property type="protein sequence ID" value="ABM81385"/>
    <property type="gene ID" value="Hbut_1564"/>
</dbReference>
<dbReference type="GeneID" id="4782615"/>
<dbReference type="KEGG" id="hbu:Hbut_1564"/>
<dbReference type="eggNOG" id="arCOG00970">
    <property type="taxonomic scope" value="Archaea"/>
</dbReference>
<dbReference type="HOGENOM" id="CLU_035750_7_2_2"/>
<dbReference type="OrthoDB" id="6330at2157"/>
<dbReference type="Proteomes" id="UP000002593">
    <property type="component" value="Chromosome"/>
</dbReference>
<dbReference type="GO" id="GO:0005737">
    <property type="term" value="C:cytoplasm"/>
    <property type="evidence" value="ECO:0007669"/>
    <property type="project" value="UniProtKB-SubCell"/>
</dbReference>
<dbReference type="GO" id="GO:0019774">
    <property type="term" value="C:proteasome core complex, beta-subunit complex"/>
    <property type="evidence" value="ECO:0007669"/>
    <property type="project" value="UniProtKB-UniRule"/>
</dbReference>
<dbReference type="GO" id="GO:0004298">
    <property type="term" value="F:threonine-type endopeptidase activity"/>
    <property type="evidence" value="ECO:0007669"/>
    <property type="project" value="UniProtKB-UniRule"/>
</dbReference>
<dbReference type="GO" id="GO:0010498">
    <property type="term" value="P:proteasomal protein catabolic process"/>
    <property type="evidence" value="ECO:0007669"/>
    <property type="project" value="UniProtKB-UniRule"/>
</dbReference>
<dbReference type="Gene3D" id="3.60.20.10">
    <property type="entry name" value="Glutamine Phosphoribosylpyrophosphate, subunit 1, domain 1"/>
    <property type="match status" value="1"/>
</dbReference>
<dbReference type="HAMAP" id="MF_02113_A">
    <property type="entry name" value="Proteasome_B_A"/>
    <property type="match status" value="1"/>
</dbReference>
<dbReference type="InterPro" id="IPR029055">
    <property type="entry name" value="Ntn_hydrolases_N"/>
</dbReference>
<dbReference type="InterPro" id="IPR019983">
    <property type="entry name" value="Pept_T1A_Psome_bsu_arc"/>
</dbReference>
<dbReference type="InterPro" id="IPR000243">
    <property type="entry name" value="Pept_T1A_subB"/>
</dbReference>
<dbReference type="InterPro" id="IPR016050">
    <property type="entry name" value="Proteasome_bsu_CS"/>
</dbReference>
<dbReference type="InterPro" id="IPR001353">
    <property type="entry name" value="Proteasome_sua/b"/>
</dbReference>
<dbReference type="InterPro" id="IPR023333">
    <property type="entry name" value="Proteasome_suB-type"/>
</dbReference>
<dbReference type="NCBIfam" id="TIGR03634">
    <property type="entry name" value="arc_protsome_B"/>
    <property type="match status" value="1"/>
</dbReference>
<dbReference type="PANTHER" id="PTHR32194">
    <property type="entry name" value="METALLOPROTEASE TLDD"/>
    <property type="match status" value="1"/>
</dbReference>
<dbReference type="PANTHER" id="PTHR32194:SF2">
    <property type="entry name" value="PROTEASOME SUBUNIT BETA TYPE-1"/>
    <property type="match status" value="1"/>
</dbReference>
<dbReference type="Pfam" id="PF00227">
    <property type="entry name" value="Proteasome"/>
    <property type="match status" value="1"/>
</dbReference>
<dbReference type="PRINTS" id="PR00141">
    <property type="entry name" value="PROTEASOME"/>
</dbReference>
<dbReference type="SUPFAM" id="SSF56235">
    <property type="entry name" value="N-terminal nucleophile aminohydrolases (Ntn hydrolases)"/>
    <property type="match status" value="1"/>
</dbReference>
<dbReference type="PROSITE" id="PS00854">
    <property type="entry name" value="PROTEASOME_BETA_1"/>
    <property type="match status" value="1"/>
</dbReference>
<dbReference type="PROSITE" id="PS51476">
    <property type="entry name" value="PROTEASOME_BETA_2"/>
    <property type="match status" value="1"/>
</dbReference>
<organism>
    <name type="scientific">Hyperthermus butylicus (strain DSM 5456 / JCM 9403 / PLM1-5)</name>
    <dbReference type="NCBI Taxonomy" id="415426"/>
    <lineage>
        <taxon>Archaea</taxon>
        <taxon>Thermoproteota</taxon>
        <taxon>Thermoprotei</taxon>
        <taxon>Desulfurococcales</taxon>
        <taxon>Pyrodictiaceae</taxon>
        <taxon>Hyperthermus</taxon>
    </lineage>
</organism>
<evidence type="ECO:0000255" key="1">
    <source>
        <dbReference type="HAMAP-Rule" id="MF_02113"/>
    </source>
</evidence>
<sequence length="204" mass="21969">MSYEYGTGATAVGIRGAGYVVLAAEKRVSYGGFIISKTARKVYKITDYLGLALAGLFADLQAISKILRAEIEYYNIVTGRRISVRAVARLLATILYSYKYYPFLSETLVGGLEADGTAKLYVMDPLGSLIEDDYAAIGSGAPIAIGILENGYSKDMSVDDAKKLAIAAVRAAIERDAMSGDGIDLLVIRREEDSIKAEEESITI</sequence>